<feature type="chain" id="PRO_1000143734" description="UPF0387 membrane protein YohO">
    <location>
        <begin position="1"/>
        <end position="35"/>
    </location>
</feature>
<feature type="transmembrane region" description="Helical" evidence="1">
    <location>
        <begin position="6"/>
        <end position="26"/>
    </location>
</feature>
<gene>
    <name evidence="1" type="primary">yohO</name>
    <name type="ordered locus">ECDH10B_2283</name>
</gene>
<reference key="1">
    <citation type="journal article" date="2008" name="J. Bacteriol.">
        <title>The complete genome sequence of Escherichia coli DH10B: insights into the biology of a laboratory workhorse.</title>
        <authorList>
            <person name="Durfee T."/>
            <person name="Nelson R."/>
            <person name="Baldwin S."/>
            <person name="Plunkett G. III"/>
            <person name="Burland V."/>
            <person name="Mau B."/>
            <person name="Petrosino J.F."/>
            <person name="Qin X."/>
            <person name="Muzny D.M."/>
            <person name="Ayele M."/>
            <person name="Gibbs R.A."/>
            <person name="Csorgo B."/>
            <person name="Posfai G."/>
            <person name="Weinstock G.M."/>
            <person name="Blattner F.R."/>
        </authorList>
    </citation>
    <scope>NUCLEOTIDE SEQUENCE [LARGE SCALE GENOMIC DNA]</scope>
    <source>
        <strain>K12 / DH10B</strain>
    </source>
</reference>
<name>YOHO_ECODH</name>
<dbReference type="EMBL" id="CP000948">
    <property type="protein sequence ID" value="ACB03292.1"/>
    <property type="molecule type" value="Genomic_DNA"/>
</dbReference>
<dbReference type="RefSeq" id="WP_001216963.1">
    <property type="nucleotide sequence ID" value="NC_010473.1"/>
</dbReference>
<dbReference type="KEGG" id="ecd:ECDH10B_2283"/>
<dbReference type="HOGENOM" id="CLU_220259_0_0_6"/>
<dbReference type="GO" id="GO:0005886">
    <property type="term" value="C:plasma membrane"/>
    <property type="evidence" value="ECO:0007669"/>
    <property type="project" value="UniProtKB-SubCell"/>
</dbReference>
<dbReference type="HAMAP" id="MF_01362">
    <property type="entry name" value="UPF0387"/>
    <property type="match status" value="1"/>
</dbReference>
<dbReference type="InterPro" id="IPR020870">
    <property type="entry name" value="UPF0387_membrane"/>
</dbReference>
<dbReference type="NCBIfam" id="NF010225">
    <property type="entry name" value="PRK13681.1"/>
    <property type="match status" value="1"/>
</dbReference>
<comment type="subcellular location">
    <subcellularLocation>
        <location evidence="1">Cell inner membrane</location>
        <topology evidence="1">Single-pass membrane protein</topology>
    </subcellularLocation>
</comment>
<comment type="similarity">
    <text evidence="1">Belongs to the UPF0387 family.</text>
</comment>
<keyword id="KW-0997">Cell inner membrane</keyword>
<keyword id="KW-1003">Cell membrane</keyword>
<keyword id="KW-0472">Membrane</keyword>
<keyword id="KW-0812">Transmembrane</keyword>
<keyword id="KW-1133">Transmembrane helix</keyword>
<evidence type="ECO:0000255" key="1">
    <source>
        <dbReference type="HAMAP-Rule" id="MF_01362"/>
    </source>
</evidence>
<protein>
    <recommendedName>
        <fullName evidence="1">UPF0387 membrane protein YohO</fullName>
    </recommendedName>
</protein>
<proteinExistence type="inferred from homology"/>
<organism>
    <name type="scientific">Escherichia coli (strain K12 / DH10B)</name>
    <dbReference type="NCBI Taxonomy" id="316385"/>
    <lineage>
        <taxon>Bacteria</taxon>
        <taxon>Pseudomonadati</taxon>
        <taxon>Pseudomonadota</taxon>
        <taxon>Gammaproteobacteria</taxon>
        <taxon>Enterobacterales</taxon>
        <taxon>Enterobacteriaceae</taxon>
        <taxon>Escherichia</taxon>
    </lineage>
</organism>
<sequence>MRIAKIGVIALFLFMALGGIGGVMLAGYTFILRAG</sequence>
<accession>B1X7L6</accession>